<organism>
    <name type="scientific">Bacillus subtilis (strain 168)</name>
    <dbReference type="NCBI Taxonomy" id="224308"/>
    <lineage>
        <taxon>Bacteria</taxon>
        <taxon>Bacillati</taxon>
        <taxon>Bacillota</taxon>
        <taxon>Bacilli</taxon>
        <taxon>Bacillales</taxon>
        <taxon>Bacillaceae</taxon>
        <taxon>Bacillus</taxon>
    </lineage>
</organism>
<dbReference type="EMBL" id="L77246">
    <property type="protein sequence ID" value="AAA96619.1"/>
    <property type="molecule type" value="Genomic_DNA"/>
</dbReference>
<dbReference type="EMBL" id="AL009126">
    <property type="protein sequence ID" value="CAB14116.1"/>
    <property type="molecule type" value="Genomic_DNA"/>
</dbReference>
<dbReference type="PIR" id="C69934">
    <property type="entry name" value="C69934"/>
</dbReference>
<dbReference type="RefSeq" id="WP_003230767.1">
    <property type="nucleotide sequence ID" value="NZ_OZ025638.1"/>
</dbReference>
<dbReference type="FunCoup" id="P54163">
    <property type="interactions" value="5"/>
</dbReference>
<dbReference type="STRING" id="224308.BSU21980"/>
<dbReference type="TCDB" id="2.A.88.8.2">
    <property type="family name" value="the vitamin uptake transporter (vut) family"/>
</dbReference>
<dbReference type="PaxDb" id="224308-BSU21980"/>
<dbReference type="EnsemblBacteria" id="CAB14116">
    <property type="protein sequence ID" value="CAB14116"/>
    <property type="gene ID" value="BSU_21980"/>
</dbReference>
<dbReference type="GeneID" id="939075"/>
<dbReference type="KEGG" id="bsu:BSU21980"/>
<dbReference type="PATRIC" id="fig|224308.179.peg.2400"/>
<dbReference type="eggNOG" id="COG1738">
    <property type="taxonomic scope" value="Bacteria"/>
</dbReference>
<dbReference type="InParanoid" id="P54163"/>
<dbReference type="OrthoDB" id="9805479at2"/>
<dbReference type="PhylomeDB" id="P54163"/>
<dbReference type="BioCyc" id="BSUB:BSU21980-MONOMER"/>
<dbReference type="Proteomes" id="UP000001570">
    <property type="component" value="Chromosome"/>
</dbReference>
<dbReference type="GO" id="GO:0005886">
    <property type="term" value="C:plasma membrane"/>
    <property type="evidence" value="ECO:0000318"/>
    <property type="project" value="GO_Central"/>
</dbReference>
<dbReference type="GO" id="GO:0022857">
    <property type="term" value="F:transmembrane transporter activity"/>
    <property type="evidence" value="ECO:0007669"/>
    <property type="project" value="UniProtKB-UniRule"/>
</dbReference>
<dbReference type="GO" id="GO:0072531">
    <property type="term" value="P:pyrimidine-containing compound transmembrane transport"/>
    <property type="evidence" value="ECO:0000318"/>
    <property type="project" value="GO_Central"/>
</dbReference>
<dbReference type="GO" id="GO:1990397">
    <property type="term" value="P:queuosine salvage"/>
    <property type="evidence" value="ECO:0007669"/>
    <property type="project" value="UniProtKB-UniRule"/>
</dbReference>
<dbReference type="HAMAP" id="MF_02088">
    <property type="entry name" value="Q_prec_transport"/>
    <property type="match status" value="1"/>
</dbReference>
<dbReference type="InterPro" id="IPR003744">
    <property type="entry name" value="YhhQ"/>
</dbReference>
<dbReference type="NCBIfam" id="TIGR00697">
    <property type="entry name" value="queuosine precursor transporter"/>
    <property type="match status" value="1"/>
</dbReference>
<dbReference type="PANTHER" id="PTHR34300">
    <property type="entry name" value="QUEUOSINE PRECURSOR TRANSPORTER-RELATED"/>
    <property type="match status" value="1"/>
</dbReference>
<dbReference type="PANTHER" id="PTHR34300:SF2">
    <property type="entry name" value="QUEUOSINE PRECURSOR TRANSPORTER-RELATED"/>
    <property type="match status" value="1"/>
</dbReference>
<dbReference type="Pfam" id="PF02592">
    <property type="entry name" value="Vut_1"/>
    <property type="match status" value="1"/>
</dbReference>
<feature type="chain" id="PRO_0000049687" description="Probable queuosine precursor transporter">
    <location>
        <begin position="1"/>
        <end position="229"/>
    </location>
</feature>
<feature type="transmembrane region" description="Helical" evidence="1">
    <location>
        <begin position="6"/>
        <end position="26"/>
    </location>
</feature>
<feature type="transmembrane region" description="Helical" evidence="1">
    <location>
        <begin position="28"/>
        <end position="48"/>
    </location>
</feature>
<feature type="transmembrane region" description="Helical" evidence="1">
    <location>
        <begin position="49"/>
        <end position="69"/>
    </location>
</feature>
<feature type="transmembrane region" description="Helical" evidence="1">
    <location>
        <begin position="86"/>
        <end position="106"/>
    </location>
</feature>
<feature type="transmembrane region" description="Helical" evidence="1">
    <location>
        <begin position="118"/>
        <end position="138"/>
    </location>
</feature>
<feature type="transmembrane region" description="Helical" evidence="1">
    <location>
        <begin position="160"/>
        <end position="182"/>
    </location>
</feature>
<feature type="transmembrane region" description="Helical" evidence="1">
    <location>
        <begin position="192"/>
        <end position="214"/>
    </location>
</feature>
<proteinExistence type="inferred from homology"/>
<reference key="1">
    <citation type="journal article" date="1996" name="Microbiology">
        <title>Organization of the Bacillus subtilis 168 chromosome between kdg and the attachment site of the SP beta prophage: use of long accurate PCR and yeast artificial chromosomes for sequencing.</title>
        <authorList>
            <person name="Capuano V."/>
            <person name="Galleron N."/>
            <person name="Pujic P."/>
            <person name="Sorokin A."/>
            <person name="Ehrlich S.D."/>
        </authorList>
    </citation>
    <scope>NUCLEOTIDE SEQUENCE [GENOMIC DNA]</scope>
    <source>
        <strain>168 / Marburg / ATCC 6051 / DSM 10 / JCM 1465 / NBRC 13719 / NCIMB 3610 / NRRL NRS-744 / VKM B-501</strain>
    </source>
</reference>
<reference key="2">
    <citation type="journal article" date="1997" name="Nature">
        <title>The complete genome sequence of the Gram-positive bacterium Bacillus subtilis.</title>
        <authorList>
            <person name="Kunst F."/>
            <person name="Ogasawara N."/>
            <person name="Moszer I."/>
            <person name="Albertini A.M."/>
            <person name="Alloni G."/>
            <person name="Azevedo V."/>
            <person name="Bertero M.G."/>
            <person name="Bessieres P."/>
            <person name="Bolotin A."/>
            <person name="Borchert S."/>
            <person name="Borriss R."/>
            <person name="Boursier L."/>
            <person name="Brans A."/>
            <person name="Braun M."/>
            <person name="Brignell S.C."/>
            <person name="Bron S."/>
            <person name="Brouillet S."/>
            <person name="Bruschi C.V."/>
            <person name="Caldwell B."/>
            <person name="Capuano V."/>
            <person name="Carter N.M."/>
            <person name="Choi S.-K."/>
            <person name="Codani J.-J."/>
            <person name="Connerton I.F."/>
            <person name="Cummings N.J."/>
            <person name="Daniel R.A."/>
            <person name="Denizot F."/>
            <person name="Devine K.M."/>
            <person name="Duesterhoeft A."/>
            <person name="Ehrlich S.D."/>
            <person name="Emmerson P.T."/>
            <person name="Entian K.-D."/>
            <person name="Errington J."/>
            <person name="Fabret C."/>
            <person name="Ferrari E."/>
            <person name="Foulger D."/>
            <person name="Fritz C."/>
            <person name="Fujita M."/>
            <person name="Fujita Y."/>
            <person name="Fuma S."/>
            <person name="Galizzi A."/>
            <person name="Galleron N."/>
            <person name="Ghim S.-Y."/>
            <person name="Glaser P."/>
            <person name="Goffeau A."/>
            <person name="Golightly E.J."/>
            <person name="Grandi G."/>
            <person name="Guiseppi G."/>
            <person name="Guy B.J."/>
            <person name="Haga K."/>
            <person name="Haiech J."/>
            <person name="Harwood C.R."/>
            <person name="Henaut A."/>
            <person name="Hilbert H."/>
            <person name="Holsappel S."/>
            <person name="Hosono S."/>
            <person name="Hullo M.-F."/>
            <person name="Itaya M."/>
            <person name="Jones L.-M."/>
            <person name="Joris B."/>
            <person name="Karamata D."/>
            <person name="Kasahara Y."/>
            <person name="Klaerr-Blanchard M."/>
            <person name="Klein C."/>
            <person name="Kobayashi Y."/>
            <person name="Koetter P."/>
            <person name="Koningstein G."/>
            <person name="Krogh S."/>
            <person name="Kumano M."/>
            <person name="Kurita K."/>
            <person name="Lapidus A."/>
            <person name="Lardinois S."/>
            <person name="Lauber J."/>
            <person name="Lazarevic V."/>
            <person name="Lee S.-M."/>
            <person name="Levine A."/>
            <person name="Liu H."/>
            <person name="Masuda S."/>
            <person name="Mauel C."/>
            <person name="Medigue C."/>
            <person name="Medina N."/>
            <person name="Mellado R.P."/>
            <person name="Mizuno M."/>
            <person name="Moestl D."/>
            <person name="Nakai S."/>
            <person name="Noback M."/>
            <person name="Noone D."/>
            <person name="O'Reilly M."/>
            <person name="Ogawa K."/>
            <person name="Ogiwara A."/>
            <person name="Oudega B."/>
            <person name="Park S.-H."/>
            <person name="Parro V."/>
            <person name="Pohl T.M."/>
            <person name="Portetelle D."/>
            <person name="Porwollik S."/>
            <person name="Prescott A.M."/>
            <person name="Presecan E."/>
            <person name="Pujic P."/>
            <person name="Purnelle B."/>
            <person name="Rapoport G."/>
            <person name="Rey M."/>
            <person name="Reynolds S."/>
            <person name="Rieger M."/>
            <person name="Rivolta C."/>
            <person name="Rocha E."/>
            <person name="Roche B."/>
            <person name="Rose M."/>
            <person name="Sadaie Y."/>
            <person name="Sato T."/>
            <person name="Scanlan E."/>
            <person name="Schleich S."/>
            <person name="Schroeter R."/>
            <person name="Scoffone F."/>
            <person name="Sekiguchi J."/>
            <person name="Sekowska A."/>
            <person name="Seror S.J."/>
            <person name="Serror P."/>
            <person name="Shin B.-S."/>
            <person name="Soldo B."/>
            <person name="Sorokin A."/>
            <person name="Tacconi E."/>
            <person name="Takagi T."/>
            <person name="Takahashi H."/>
            <person name="Takemaru K."/>
            <person name="Takeuchi M."/>
            <person name="Tamakoshi A."/>
            <person name="Tanaka T."/>
            <person name="Terpstra P."/>
            <person name="Tognoni A."/>
            <person name="Tosato V."/>
            <person name="Uchiyama S."/>
            <person name="Vandenbol M."/>
            <person name="Vannier F."/>
            <person name="Vassarotti A."/>
            <person name="Viari A."/>
            <person name="Wambutt R."/>
            <person name="Wedler E."/>
            <person name="Wedler H."/>
            <person name="Weitzenegger T."/>
            <person name="Winters P."/>
            <person name="Wipat A."/>
            <person name="Yamamoto H."/>
            <person name="Yamane K."/>
            <person name="Yasumoto K."/>
            <person name="Yata K."/>
            <person name="Yoshida K."/>
            <person name="Yoshikawa H.-F."/>
            <person name="Zumstein E."/>
            <person name="Yoshikawa H."/>
            <person name="Danchin A."/>
        </authorList>
    </citation>
    <scope>NUCLEOTIDE SEQUENCE [LARGE SCALE GENOMIC DNA]</scope>
    <source>
        <strain>168</strain>
    </source>
</reference>
<comment type="function">
    <text evidence="1">Involved in the import of queuosine (Q) precursors, required for Q precursor salvage.</text>
</comment>
<comment type="subcellular location">
    <subcellularLocation>
        <location evidence="1 2">Cell membrane</location>
        <topology evidence="1">Multi-pass membrane protein</topology>
    </subcellularLocation>
</comment>
<comment type="similarity">
    <text evidence="1 2">Belongs to the vitamin uptake transporter (VUT/ECF) (TC 2.A.88) family. Q precursor transporter subfamily.</text>
</comment>
<sequence length="229" mass="25671">MFNNSFWIFFAIIHFIIVLLFYKGFGKMGLFVWIGFATVCANLQVVKTVELFGLTATLGNVMYGTIFFATDVLNEKYGPAEARKAVWLGFSTLLTLTFVMQGVLLFEPASSDISQTALETIFGFLPRVALGSLLAFIFSQTLDVYVYSAIRRIFPSDRLLWLRNGGSTAVSQLFDTFIFTAVAFLGIYPADVWLHIFISTYLIKFAVSLISLPYAYAAKKMIPNDERSS</sequence>
<keyword id="KW-1003">Cell membrane</keyword>
<keyword id="KW-0472">Membrane</keyword>
<keyword id="KW-1185">Reference proteome</keyword>
<keyword id="KW-0812">Transmembrane</keyword>
<keyword id="KW-1133">Transmembrane helix</keyword>
<keyword id="KW-0813">Transport</keyword>
<protein>
    <recommendedName>
        <fullName evidence="1">Probable queuosine precursor transporter</fullName>
        <shortName evidence="1">Q precursor transporter</shortName>
    </recommendedName>
</protein>
<accession>P54163</accession>
<gene>
    <name type="primary">ypdP</name>
    <name type="ordered locus">BSU21980</name>
</gene>
<evidence type="ECO:0000255" key="1">
    <source>
        <dbReference type="HAMAP-Rule" id="MF_02088"/>
    </source>
</evidence>
<evidence type="ECO:0000305" key="2"/>
<name>QPTR_BACSU</name>